<feature type="chain" id="PRO_0000173045" description="Regucalcin">
    <location>
        <begin position="1"/>
        <end position="299"/>
    </location>
</feature>
<feature type="active site" description="Proton donor/acceptor" evidence="1">
    <location>
        <position position="204"/>
    </location>
</feature>
<feature type="binding site" evidence="1">
    <location>
        <position position="18"/>
    </location>
    <ligand>
        <name>a divalent metal cation</name>
        <dbReference type="ChEBI" id="CHEBI:60240"/>
    </ligand>
</feature>
<feature type="binding site" evidence="1">
    <location>
        <position position="101"/>
    </location>
    <ligand>
        <name>substrate</name>
    </ligand>
</feature>
<feature type="binding site" evidence="1">
    <location>
        <position position="103"/>
    </location>
    <ligand>
        <name>substrate</name>
    </ligand>
</feature>
<feature type="binding site" evidence="1">
    <location>
        <position position="121"/>
    </location>
    <ligand>
        <name>substrate</name>
    </ligand>
</feature>
<feature type="binding site" evidence="1">
    <location>
        <position position="154"/>
    </location>
    <ligand>
        <name>a divalent metal cation</name>
        <dbReference type="ChEBI" id="CHEBI:60240"/>
    </ligand>
</feature>
<feature type="binding site" evidence="1">
    <location>
        <position position="204"/>
    </location>
    <ligand>
        <name>a divalent metal cation</name>
        <dbReference type="ChEBI" id="CHEBI:60240"/>
    </ligand>
</feature>
<feature type="modified residue" description="N6-succinyllysine" evidence="2">
    <location>
        <position position="244"/>
    </location>
</feature>
<feature type="modified residue" description="N6-succinyllysine" evidence="2">
    <location>
        <position position="253"/>
    </location>
</feature>
<protein>
    <recommendedName>
        <fullName>Regucalcin</fullName>
        <shortName>RC</shortName>
    </recommendedName>
    <alternativeName>
        <fullName>Gluconolactonase</fullName>
        <shortName>GNL</shortName>
        <ecNumber>3.1.1.17</ecNumber>
    </alternativeName>
    <alternativeName>
        <fullName>Senescence marker protein 30</fullName>
        <shortName>SMP-30</shortName>
    </alternativeName>
</protein>
<comment type="function">
    <text evidence="1">Gluconolactonase with low activity towards other sugar lactones, including gulonolactone and galactonolactone. Catalyzes a key step in ascorbic acid (vitamin C) biosynthesis. Can also hydrolyze diisopropyl phosphorofluoridate and phenylacetate (in vitro). Calcium-binding protein. Modulates Ca(2+) signaling, and Ca(2+)-dependent cellular processes and enzyme activities (By similarity).</text>
</comment>
<comment type="catalytic activity">
    <reaction>
        <text>D-glucono-1,5-lactone + H2O = D-gluconate + H(+)</text>
        <dbReference type="Rhea" id="RHEA:10440"/>
        <dbReference type="ChEBI" id="CHEBI:15377"/>
        <dbReference type="ChEBI" id="CHEBI:15378"/>
        <dbReference type="ChEBI" id="CHEBI:16217"/>
        <dbReference type="ChEBI" id="CHEBI:18391"/>
        <dbReference type="EC" id="3.1.1.17"/>
    </reaction>
</comment>
<comment type="cofactor">
    <cofactor evidence="1">
        <name>Zn(2+)</name>
        <dbReference type="ChEBI" id="CHEBI:29105"/>
    </cofactor>
    <cofactor evidence="1">
        <name>Mn(2+)</name>
        <dbReference type="ChEBI" id="CHEBI:29035"/>
    </cofactor>
    <cofactor evidence="1">
        <name>Ca(2+)</name>
        <dbReference type="ChEBI" id="CHEBI:29108"/>
    </cofactor>
    <cofactor evidence="1">
        <name>Mg(2+)</name>
        <dbReference type="ChEBI" id="CHEBI:18420"/>
    </cofactor>
    <text evidence="1">Binds 1 divalent metal cation per subunit. Most active with Zn(2+) and Mn(2+) ions. The physiological cofactor is most likely Ca(2+) or Mg(2+).</text>
</comment>
<comment type="pathway">
    <text>Cofactor biosynthesis; L-ascorbate biosynthesis via UDP-alpha-D-glucuronate pathway; L-ascorbate from UDP-alpha-D-glucuronate: step 3/4.</text>
</comment>
<comment type="subunit">
    <text evidence="1">Monomer.</text>
</comment>
<comment type="subcellular location">
    <subcellularLocation>
        <location evidence="1">Cytoplasm</location>
    </subcellularLocation>
</comment>
<comment type="similarity">
    <text evidence="3">Belongs to the SMP-30/CGR1 family.</text>
</comment>
<sequence>MSSIKIECVLRENCHCGESPVWEEASNSLLFVDIPAKKVCRWDSLSKQVQRVTVDAPVSSVALRQSGGYVATVGTKFCALNWEDQSAVVLATVDKEKKNNRFNDGKVDPAGRYFAGTMAEETAPAVLERRQGSLYSLFPDHHVEKYFDQVDISNGLDWSMDHKIFYYIDSLSYSVDAFDYDLQTGKISNRRSVYKLEKEEQIPDGMCIDVEGKLWVACYNGGRVIRLDPETGKRLQTVKLPVDKTTSCCFGGKDYSEMYVTCARDGLDSKGLLQQPEAGGIFKITGLGVKGIPPYPYTG</sequence>
<gene>
    <name type="primary">RGN</name>
    <name type="synonym">SMP30</name>
</gene>
<reference key="1">
    <citation type="journal article" date="2000" name="Int. J. Mol. Med.">
        <title>The gene of Ca2+-binding protein regucalcin is highly conserved in vertebrate species.</title>
        <authorList>
            <person name="Misawa H."/>
            <person name="Yamaguchi M."/>
        </authorList>
    </citation>
    <scope>NUCLEOTIDE SEQUENCE [MRNA]</scope>
    <source>
        <tissue>Liver</tissue>
    </source>
</reference>
<reference key="2">
    <citation type="submission" date="2005-08" db="EMBL/GenBank/DDBJ databases">
        <authorList>
            <consortium name="NIH - Mammalian Gene Collection (MGC) project"/>
        </authorList>
    </citation>
    <scope>NUCLEOTIDE SEQUENCE [LARGE SCALE MRNA]</scope>
    <source>
        <strain>Hereford</strain>
        <tissue>Fetal liver</tissue>
    </source>
</reference>
<name>RGN_BOVIN</name>
<proteinExistence type="evidence at transcript level"/>
<keyword id="KW-0060">Ascorbate biosynthesis</keyword>
<keyword id="KW-0106">Calcium</keyword>
<keyword id="KW-0963">Cytoplasm</keyword>
<keyword id="KW-0378">Hydrolase</keyword>
<keyword id="KW-0479">Metal-binding</keyword>
<keyword id="KW-1185">Reference proteome</keyword>
<evidence type="ECO:0000250" key="1"/>
<evidence type="ECO:0000250" key="2">
    <source>
        <dbReference type="UniProtKB" id="Q64374"/>
    </source>
</evidence>
<evidence type="ECO:0000305" key="3"/>
<accession>Q9TTJ5</accession>
<accession>Q3ZBB2</accession>
<dbReference type="EC" id="3.1.1.17"/>
<dbReference type="EMBL" id="AB035446">
    <property type="protein sequence ID" value="BAA88080.1"/>
    <property type="molecule type" value="mRNA"/>
</dbReference>
<dbReference type="EMBL" id="BC103461">
    <property type="protein sequence ID" value="AAI03462.1"/>
    <property type="molecule type" value="mRNA"/>
</dbReference>
<dbReference type="RefSeq" id="NP_776382.1">
    <property type="nucleotide sequence ID" value="NM_173957.3"/>
</dbReference>
<dbReference type="SMR" id="Q9TTJ5"/>
<dbReference type="FunCoup" id="Q9TTJ5">
    <property type="interactions" value="402"/>
</dbReference>
<dbReference type="STRING" id="9913.ENSBTAP00000070358"/>
<dbReference type="PaxDb" id="9913-ENSBTAP00000055515"/>
<dbReference type="PeptideAtlas" id="Q9TTJ5"/>
<dbReference type="GeneID" id="280910"/>
<dbReference type="KEGG" id="bta:280910"/>
<dbReference type="CTD" id="9104"/>
<dbReference type="eggNOG" id="KOG4499">
    <property type="taxonomic scope" value="Eukaryota"/>
</dbReference>
<dbReference type="HOGENOM" id="CLU_036110_3_2_1"/>
<dbReference type="InParanoid" id="Q9TTJ5"/>
<dbReference type="OrthoDB" id="423498at2759"/>
<dbReference type="TreeFam" id="TF323663"/>
<dbReference type="UniPathway" id="UPA00991">
    <property type="reaction ID" value="UER00938"/>
</dbReference>
<dbReference type="Proteomes" id="UP000009136">
    <property type="component" value="Unplaced"/>
</dbReference>
<dbReference type="GO" id="GO:0005737">
    <property type="term" value="C:cytoplasm"/>
    <property type="evidence" value="ECO:0000250"/>
    <property type="project" value="UniProtKB"/>
</dbReference>
<dbReference type="GO" id="GO:0005634">
    <property type="term" value="C:nucleus"/>
    <property type="evidence" value="ECO:0000250"/>
    <property type="project" value="UniProtKB"/>
</dbReference>
<dbReference type="GO" id="GO:0005509">
    <property type="term" value="F:calcium ion binding"/>
    <property type="evidence" value="ECO:0000250"/>
    <property type="project" value="UniProtKB"/>
</dbReference>
<dbReference type="GO" id="GO:0030234">
    <property type="term" value="F:enzyme regulator activity"/>
    <property type="evidence" value="ECO:0007669"/>
    <property type="project" value="InterPro"/>
</dbReference>
<dbReference type="GO" id="GO:0004341">
    <property type="term" value="F:gluconolactonase activity"/>
    <property type="evidence" value="ECO:0000250"/>
    <property type="project" value="UniProtKB"/>
</dbReference>
<dbReference type="GO" id="GO:0008270">
    <property type="term" value="F:zinc ion binding"/>
    <property type="evidence" value="ECO:0000250"/>
    <property type="project" value="UniProtKB"/>
</dbReference>
<dbReference type="GO" id="GO:0006874">
    <property type="term" value="P:intracellular calcium ion homeostasis"/>
    <property type="evidence" value="ECO:0000250"/>
    <property type="project" value="UniProtKB"/>
</dbReference>
<dbReference type="GO" id="GO:0019853">
    <property type="term" value="P:L-ascorbic acid biosynthetic process"/>
    <property type="evidence" value="ECO:0000250"/>
    <property type="project" value="UniProtKB"/>
</dbReference>
<dbReference type="GO" id="GO:0032781">
    <property type="term" value="P:positive regulation of ATP-dependent activity"/>
    <property type="evidence" value="ECO:0000250"/>
    <property type="project" value="UniProtKB"/>
</dbReference>
<dbReference type="GO" id="GO:0050848">
    <property type="term" value="P:regulation of calcium-mediated signaling"/>
    <property type="evidence" value="ECO:0000250"/>
    <property type="project" value="UniProtKB"/>
</dbReference>
<dbReference type="FunFam" id="2.120.10.30:FF:000027">
    <property type="entry name" value="Regucalcin homologue"/>
    <property type="match status" value="1"/>
</dbReference>
<dbReference type="Gene3D" id="2.120.10.30">
    <property type="entry name" value="TolB, C-terminal domain"/>
    <property type="match status" value="1"/>
</dbReference>
<dbReference type="InterPro" id="IPR011042">
    <property type="entry name" value="6-blade_b-propeller_TolB-like"/>
</dbReference>
<dbReference type="InterPro" id="IPR008367">
    <property type="entry name" value="Regucalcin"/>
</dbReference>
<dbReference type="InterPro" id="IPR013658">
    <property type="entry name" value="SGL"/>
</dbReference>
<dbReference type="InterPro" id="IPR005511">
    <property type="entry name" value="SMP-30"/>
</dbReference>
<dbReference type="PANTHER" id="PTHR10907">
    <property type="entry name" value="REGUCALCIN"/>
    <property type="match status" value="1"/>
</dbReference>
<dbReference type="PANTHER" id="PTHR10907:SF54">
    <property type="entry name" value="REGUCALCIN"/>
    <property type="match status" value="1"/>
</dbReference>
<dbReference type="Pfam" id="PF08450">
    <property type="entry name" value="SGL"/>
    <property type="match status" value="1"/>
</dbReference>
<dbReference type="PRINTS" id="PR01791">
    <property type="entry name" value="REGUCALCIN"/>
</dbReference>
<dbReference type="PRINTS" id="PR01790">
    <property type="entry name" value="SMP30FAMILY"/>
</dbReference>
<dbReference type="SUPFAM" id="SSF63829">
    <property type="entry name" value="Calcium-dependent phosphotriesterase"/>
    <property type="match status" value="1"/>
</dbReference>
<organism>
    <name type="scientific">Bos taurus</name>
    <name type="common">Bovine</name>
    <dbReference type="NCBI Taxonomy" id="9913"/>
    <lineage>
        <taxon>Eukaryota</taxon>
        <taxon>Metazoa</taxon>
        <taxon>Chordata</taxon>
        <taxon>Craniata</taxon>
        <taxon>Vertebrata</taxon>
        <taxon>Euteleostomi</taxon>
        <taxon>Mammalia</taxon>
        <taxon>Eutheria</taxon>
        <taxon>Laurasiatheria</taxon>
        <taxon>Artiodactyla</taxon>
        <taxon>Ruminantia</taxon>
        <taxon>Pecora</taxon>
        <taxon>Bovidae</taxon>
        <taxon>Bovinae</taxon>
        <taxon>Bos</taxon>
    </lineage>
</organism>